<proteinExistence type="evidence at transcript level"/>
<comment type="function">
    <text>May function as a calcium-binding protein.</text>
</comment>
<comment type="subcellular location">
    <subcellularLocation>
        <location>Secreted</location>
    </subcellularLocation>
    <subcellularLocation>
        <location>Endoplasmic reticulum</location>
    </subcellularLocation>
</comment>
<reference key="1">
    <citation type="journal article" date="1992" name="Eur. J. Biochem.">
        <title>A novel calcium-binding protein from Euglena gracilis. Characterisation of a cDNA encoding a 74-kDa acidic-repeat protein targeted across the endoplasmic reticulum.</title>
        <authorList>
            <person name="Gumpel N.J."/>
            <person name="Smith A.G."/>
        </authorList>
    </citation>
    <scope>NUCLEOTIDE SEQUENCE [MRNA]</scope>
</reference>
<evidence type="ECO:0000255" key="1"/>
<evidence type="ECO:0000256" key="2">
    <source>
        <dbReference type="SAM" id="MobiDB-lite"/>
    </source>
</evidence>
<dbReference type="EMBL" id="X68475">
    <property type="protein sequence ID" value="CAA48495.1"/>
    <property type="molecule type" value="mRNA"/>
</dbReference>
<dbReference type="PIR" id="S27390">
    <property type="entry name" value="S27390"/>
</dbReference>
<dbReference type="GO" id="GO:0005783">
    <property type="term" value="C:endoplasmic reticulum"/>
    <property type="evidence" value="ECO:0007669"/>
    <property type="project" value="UniProtKB-SubCell"/>
</dbReference>
<dbReference type="GO" id="GO:0005576">
    <property type="term" value="C:extracellular region"/>
    <property type="evidence" value="ECO:0007669"/>
    <property type="project" value="UniProtKB-SubCell"/>
</dbReference>
<dbReference type="GO" id="GO:0005509">
    <property type="term" value="F:calcium ion binding"/>
    <property type="evidence" value="ECO:0007669"/>
    <property type="project" value="InterPro"/>
</dbReference>
<dbReference type="Gene3D" id="4.10.1080.10">
    <property type="entry name" value="TSP type-3 repeat"/>
    <property type="match status" value="3"/>
</dbReference>
<dbReference type="InterPro" id="IPR053180">
    <property type="entry name" value="Ca-binding_acidic-repeat"/>
</dbReference>
<dbReference type="InterPro" id="IPR018247">
    <property type="entry name" value="EF_Hand_1_Ca_BS"/>
</dbReference>
<dbReference type="InterPro" id="IPR028974">
    <property type="entry name" value="TSP_type-3_rpt"/>
</dbReference>
<dbReference type="PANTHER" id="PTHR37467:SF1">
    <property type="entry name" value="EXPORTED CALCIUM-BINDING GLYCOPROTEIN"/>
    <property type="match status" value="1"/>
</dbReference>
<dbReference type="PANTHER" id="PTHR37467">
    <property type="entry name" value="EXPORTED CALCIUM-BINDING GLYCOPROTEIN-RELATED"/>
    <property type="match status" value="1"/>
</dbReference>
<dbReference type="Pfam" id="PF18884">
    <property type="entry name" value="TSP3_bac"/>
    <property type="match status" value="23"/>
</dbReference>
<dbReference type="PROSITE" id="PS00018">
    <property type="entry name" value="EF_HAND_1"/>
    <property type="match status" value="2"/>
</dbReference>
<sequence length="695" mass="73543">MSHLWCWLFLVLCLACLVLSIEAKDSDGDGLLDVDEINVYFTDPYNADSDQDGLTDGLEVNRHQTHPQDKDTDDDSIGDGVEVNNLGTNPKDPDSDDDGLTDGAEVNLYRTDPLDADSTTTGCPMGGGAEVRHRPQNGDTDDDGLTDGAEVNVHRTNPQDGDSDDDGLSDGAEVNTYHSNPKDGDSDDDGVSDGAEVNPKLKDSDGDGLTDEEEIKLYRTDPFCADSDFDGLLDGEEVKVHKTNPLDGDSDDDGLGDGAEVTHFNTNPLDADSDNDGLDDGEEINVHGTDPEDPDSDNDGLNDGDEVNVYNTDPEEDDSDEDGVCDGAEVNVHHTNPKDEDSDNDGIPDGAEINTHKTDPNDEDSDDDGIADGAEVTLTDSDGDGLPDEDEVALYNTNPANADSDYDGLTDGAEVKRYQSNPLDKDTDDDGLGDGVEVTVGTDPHDATVTTTGSRTAVEINVHGSDPNDEDTDDDGLTDGAEVNLHRTDPEDADTDDDGLTDGAEVNTYRTNPKLADSDGDGLSDGAEVNTHKSDPNDGDSDDDGVPDAAEAKVKDSDGDGLSDTDEVRFRTNPKLADTDFDGLTDGAEILKHKTDPRNRDTDGDGVADGLEVNTYGSDPKDADTDDDGLTDGAEINVHDTNPTDADSDDDGLSDGAEVMTYHTNAKDGDSDDDGKADGAEVSASTDPWRSDHSV</sequence>
<name>ARP_EUGGR</name>
<organism>
    <name type="scientific">Euglena gracilis</name>
    <dbReference type="NCBI Taxonomy" id="3039"/>
    <lineage>
        <taxon>Eukaryota</taxon>
        <taxon>Discoba</taxon>
        <taxon>Euglenozoa</taxon>
        <taxon>Euglenida</taxon>
        <taxon>Spirocuta</taxon>
        <taxon>Euglenophyceae</taxon>
        <taxon>Euglenales</taxon>
        <taxon>Euglenaceae</taxon>
        <taxon>Euglena</taxon>
    </lineage>
</organism>
<accession>Q04732</accession>
<protein>
    <recommendedName>
        <fullName>Calcium-binding acidic-repeat protein</fullName>
        <shortName>ARP</shortName>
    </recommendedName>
</protein>
<keyword id="KW-0106">Calcium</keyword>
<keyword id="KW-0256">Endoplasmic reticulum</keyword>
<keyword id="KW-0677">Repeat</keyword>
<keyword id="KW-0964">Secreted</keyword>
<keyword id="KW-0732">Signal</keyword>
<feature type="signal peptide" description="Or 23" evidence="1">
    <location>
        <begin position="1"/>
        <end position="20"/>
    </location>
</feature>
<feature type="chain" id="PRO_0000020757" description="Calcium-binding acidic-repeat protein">
    <location>
        <begin position="21"/>
        <end position="695"/>
    </location>
</feature>
<feature type="repeat" description="TSP type-3 1">
    <location>
        <begin position="24"/>
        <end position="38"/>
    </location>
</feature>
<feature type="repeat" description="TSP type-3 2">
    <location>
        <begin position="47"/>
        <end position="56"/>
    </location>
</feature>
<feature type="repeat" description="TSP type-3 3">
    <location>
        <begin position="70"/>
        <end position="82"/>
    </location>
</feature>
<feature type="repeat" description="TSP type-3 4">
    <location>
        <begin position="184"/>
        <end position="196"/>
    </location>
</feature>
<feature type="repeat" description="TSP type-3 5">
    <location>
        <begin position="202"/>
        <end position="214"/>
    </location>
</feature>
<feature type="repeat" description="TSP type-3 6">
    <location>
        <begin position="248"/>
        <end position="260"/>
    </location>
</feature>
<feature type="repeat" description="TSP type-3 7">
    <location>
        <begin position="294"/>
        <end position="308"/>
    </location>
</feature>
<feature type="repeat" description="TSP type-3 8">
    <location>
        <begin position="317"/>
        <end position="329"/>
    </location>
</feature>
<feature type="repeat" description="TSP type-3 9">
    <location>
        <begin position="340"/>
        <end position="352"/>
    </location>
</feature>
<feature type="repeat" description="TSP type-3 10">
    <location>
        <begin position="363"/>
        <end position="375"/>
    </location>
</feature>
<feature type="repeat" description="TSP type-3 11">
    <location>
        <begin position="379"/>
        <end position="393"/>
    </location>
</feature>
<feature type="repeat" description="TSP type-3 12">
    <location>
        <begin position="402"/>
        <end position="414"/>
    </location>
</feature>
<feature type="repeat" description="TSP type-3 13">
    <location>
        <begin position="425"/>
        <end position="437"/>
    </location>
</feature>
<feature type="repeat" description="TSP type-3 14">
    <location>
        <begin position="470"/>
        <end position="482"/>
    </location>
</feature>
<feature type="repeat" description="TSP type-3 15">
    <location>
        <begin position="493"/>
        <end position="505"/>
    </location>
</feature>
<feature type="repeat" description="TSP type-3 16">
    <location>
        <begin position="516"/>
        <end position="528"/>
    </location>
</feature>
<feature type="repeat" description="TSP type-3 17">
    <location>
        <begin position="539"/>
        <end position="551"/>
    </location>
</feature>
<feature type="repeat" description="TSP type-3 18">
    <location>
        <begin position="555"/>
        <end position="569"/>
    </location>
</feature>
<feature type="repeat" description="TSP type-3 19">
    <location>
        <begin position="600"/>
        <end position="609"/>
    </location>
</feature>
<feature type="repeat" description="TSP type-3 20">
    <location>
        <begin position="623"/>
        <end position="635"/>
    </location>
</feature>
<feature type="repeat" description="TSP type-3 21">
    <location>
        <begin position="646"/>
        <end position="658"/>
    </location>
</feature>
<feature type="region of interest" description="Disordered" evidence="2">
    <location>
        <begin position="45"/>
        <end position="695"/>
    </location>
</feature>
<feature type="compositionally biased region" description="Basic and acidic residues" evidence="2">
    <location>
        <begin position="59"/>
        <end position="70"/>
    </location>
</feature>
<feature type="compositionally biased region" description="Acidic residues" evidence="2">
    <location>
        <begin position="271"/>
        <end position="283"/>
    </location>
</feature>
<feature type="compositionally biased region" description="Acidic residues" evidence="2">
    <location>
        <begin position="291"/>
        <end position="306"/>
    </location>
</feature>
<feature type="compositionally biased region" description="Acidic residues" evidence="2">
    <location>
        <begin position="313"/>
        <end position="324"/>
    </location>
</feature>
<feature type="compositionally biased region" description="Acidic residues" evidence="2">
    <location>
        <begin position="361"/>
        <end position="370"/>
    </location>
</feature>
<feature type="compositionally biased region" description="Acidic residues" evidence="2">
    <location>
        <begin position="381"/>
        <end position="392"/>
    </location>
</feature>
<feature type="compositionally biased region" description="Acidic residues" evidence="2">
    <location>
        <begin position="467"/>
        <end position="477"/>
    </location>
</feature>
<feature type="compositionally biased region" description="Acidic residues" evidence="2">
    <location>
        <begin position="491"/>
        <end position="500"/>
    </location>
</feature>
<feature type="compositionally biased region" description="Acidic residues" evidence="2">
    <location>
        <begin position="537"/>
        <end position="546"/>
    </location>
</feature>
<feature type="compositionally biased region" description="Basic and acidic residues" evidence="2">
    <location>
        <begin position="589"/>
        <end position="603"/>
    </location>
</feature>
<feature type="compositionally biased region" description="Basic and acidic residues" evidence="2">
    <location>
        <begin position="665"/>
        <end position="679"/>
    </location>
</feature>